<sequence>MADQLTEEQIAEFKEAFSLFDKDGDGTITTKELGTVMRSLGQNPTEAELQDMINEVDADGNGTIDFPEFLTMMARKMKDTDSEEEIREAFRVFDKDGNGYISAAELRHVMTNLGEKLTDEEVDEMIREADIDGDGQVNYEEFVQMMTAK</sequence>
<accession>P62156</accession>
<accession>P02593</accession>
<accession>P70667</accession>
<accession>P99014</accession>
<accession>Q61379</accession>
<accession>Q61380</accession>
<evidence type="ECO:0000250" key="1">
    <source>
        <dbReference type="UniProtKB" id="P0DP23"/>
    </source>
</evidence>
<evidence type="ECO:0000255" key="2">
    <source>
        <dbReference type="PROSITE-ProRule" id="PRU00448"/>
    </source>
</evidence>
<evidence type="ECO:0000305" key="3"/>
<comment type="function">
    <text evidence="1">Calmodulin acts as part of a calcium signal transduction pathway by mediating the control of a large number of enzymes, ion channels, aquaporins and other proteins through calcium-binding. Calcium-binding is required for the activation of calmodulin. Among the enzymes to be stimulated by the calmodulin-calcium complex are a number of protein kinases, such as myosin light-chain kinases and calmodulin-dependent protein kinase type II (CaMK2), and phosphatases.</text>
</comment>
<comment type="miscellaneous">
    <text>This protein has four functional calcium-binding sites.</text>
</comment>
<comment type="similarity">
    <text evidence="3">Belongs to the calmodulin family.</text>
</comment>
<dbReference type="SMR" id="P62156"/>
<dbReference type="GO" id="GO:0016460">
    <property type="term" value="C:myosin II complex"/>
    <property type="evidence" value="ECO:0007669"/>
    <property type="project" value="TreeGrafter"/>
</dbReference>
<dbReference type="GO" id="GO:0005509">
    <property type="term" value="F:calcium ion binding"/>
    <property type="evidence" value="ECO:0007669"/>
    <property type="project" value="InterPro"/>
</dbReference>
<dbReference type="CDD" id="cd00051">
    <property type="entry name" value="EFh"/>
    <property type="match status" value="2"/>
</dbReference>
<dbReference type="FunFam" id="1.10.238.10:FF:000527">
    <property type="entry name" value="Calmodulin-3"/>
    <property type="match status" value="1"/>
</dbReference>
<dbReference type="Gene3D" id="1.10.238.10">
    <property type="entry name" value="EF-hand"/>
    <property type="match status" value="3"/>
</dbReference>
<dbReference type="InterPro" id="IPR050230">
    <property type="entry name" value="CALM/Myosin/TropC-like"/>
</dbReference>
<dbReference type="InterPro" id="IPR011992">
    <property type="entry name" value="EF-hand-dom_pair"/>
</dbReference>
<dbReference type="InterPro" id="IPR018247">
    <property type="entry name" value="EF_Hand_1_Ca_BS"/>
</dbReference>
<dbReference type="InterPro" id="IPR002048">
    <property type="entry name" value="EF_hand_dom"/>
</dbReference>
<dbReference type="PANTHER" id="PTHR23048:SF0">
    <property type="entry name" value="CALMODULIN LIKE 3"/>
    <property type="match status" value="1"/>
</dbReference>
<dbReference type="PANTHER" id="PTHR23048">
    <property type="entry name" value="MYOSIN LIGHT CHAIN 1, 3"/>
    <property type="match status" value="1"/>
</dbReference>
<dbReference type="Pfam" id="PF13499">
    <property type="entry name" value="EF-hand_7"/>
    <property type="match status" value="2"/>
</dbReference>
<dbReference type="PRINTS" id="PR00450">
    <property type="entry name" value="RECOVERIN"/>
</dbReference>
<dbReference type="SMART" id="SM00054">
    <property type="entry name" value="EFh"/>
    <property type="match status" value="4"/>
</dbReference>
<dbReference type="SUPFAM" id="SSF47473">
    <property type="entry name" value="EF-hand"/>
    <property type="match status" value="1"/>
</dbReference>
<dbReference type="PROSITE" id="PS00018">
    <property type="entry name" value="EF_HAND_1"/>
    <property type="match status" value="4"/>
</dbReference>
<dbReference type="PROSITE" id="PS50222">
    <property type="entry name" value="EF_HAND_2"/>
    <property type="match status" value="4"/>
</dbReference>
<protein>
    <recommendedName>
        <fullName>Calmodulin</fullName>
        <shortName>CaM</shortName>
    </recommendedName>
</protein>
<name>CALM_ONCSP</name>
<keyword id="KW-0007">Acetylation</keyword>
<keyword id="KW-0106">Calcium</keyword>
<keyword id="KW-0903">Direct protein sequencing</keyword>
<keyword id="KW-0479">Metal-binding</keyword>
<keyword id="KW-0488">Methylation</keyword>
<keyword id="KW-0677">Repeat</keyword>
<gene>
    <name type="primary">calm</name>
</gene>
<organism>
    <name type="scientific">Oncorhynchus sp.</name>
    <name type="common">Salmon</name>
    <dbReference type="NCBI Taxonomy" id="8025"/>
    <lineage>
        <taxon>Eukaryota</taxon>
        <taxon>Metazoa</taxon>
        <taxon>Chordata</taxon>
        <taxon>Craniata</taxon>
        <taxon>Vertebrata</taxon>
        <taxon>Euteleostomi</taxon>
        <taxon>Actinopterygii</taxon>
        <taxon>Neopterygii</taxon>
        <taxon>Teleostei</taxon>
        <taxon>Protacanthopterygii</taxon>
        <taxon>Salmoniformes</taxon>
        <taxon>Salmonidae</taxon>
        <taxon>Salmoninae</taxon>
        <taxon>Oncorhynchus</taxon>
    </lineage>
</organism>
<reference key="1">
    <citation type="journal article" date="1985" name="Seikagaku">
        <title>Amino acid sequence of salmon calmodulin.</title>
        <authorList>
            <person name="Yazawa M."/>
            <person name="Toda H."/>
            <person name="Yagi Y."/>
        </authorList>
    </citation>
    <scope>PROTEIN SEQUENCE OF 2-149</scope>
</reference>
<feature type="initiator methionine" description="Removed" evidence="1">
    <location>
        <position position="1"/>
    </location>
</feature>
<feature type="chain" id="PRO_0000198237" description="Calmodulin">
    <location>
        <begin position="2"/>
        <end position="149"/>
    </location>
</feature>
<feature type="domain" description="EF-hand 1" evidence="2">
    <location>
        <begin position="8"/>
        <end position="43"/>
    </location>
</feature>
<feature type="domain" description="EF-hand 2" evidence="2">
    <location>
        <begin position="44"/>
        <end position="79"/>
    </location>
</feature>
<feature type="domain" description="EF-hand 3" evidence="2">
    <location>
        <begin position="81"/>
        <end position="116"/>
    </location>
</feature>
<feature type="domain" description="EF-hand 4" evidence="2">
    <location>
        <begin position="117"/>
        <end position="149"/>
    </location>
</feature>
<feature type="binding site" evidence="2">
    <location>
        <position position="21"/>
    </location>
    <ligand>
        <name>Ca(2+)</name>
        <dbReference type="ChEBI" id="CHEBI:29108"/>
        <label>1</label>
    </ligand>
</feature>
<feature type="binding site" evidence="2">
    <location>
        <position position="23"/>
    </location>
    <ligand>
        <name>Ca(2+)</name>
        <dbReference type="ChEBI" id="CHEBI:29108"/>
        <label>1</label>
    </ligand>
</feature>
<feature type="binding site" evidence="2">
    <location>
        <position position="25"/>
    </location>
    <ligand>
        <name>Ca(2+)</name>
        <dbReference type="ChEBI" id="CHEBI:29108"/>
        <label>1</label>
    </ligand>
</feature>
<feature type="binding site" evidence="2">
    <location>
        <position position="27"/>
    </location>
    <ligand>
        <name>Ca(2+)</name>
        <dbReference type="ChEBI" id="CHEBI:29108"/>
        <label>1</label>
    </ligand>
</feature>
<feature type="binding site" evidence="2">
    <location>
        <position position="32"/>
    </location>
    <ligand>
        <name>Ca(2+)</name>
        <dbReference type="ChEBI" id="CHEBI:29108"/>
        <label>1</label>
    </ligand>
</feature>
<feature type="binding site" evidence="2">
    <location>
        <position position="57"/>
    </location>
    <ligand>
        <name>Ca(2+)</name>
        <dbReference type="ChEBI" id="CHEBI:29108"/>
        <label>2</label>
    </ligand>
</feature>
<feature type="binding site" evidence="2">
    <location>
        <position position="59"/>
    </location>
    <ligand>
        <name>Ca(2+)</name>
        <dbReference type="ChEBI" id="CHEBI:29108"/>
        <label>2</label>
    </ligand>
</feature>
<feature type="binding site" evidence="2">
    <location>
        <position position="61"/>
    </location>
    <ligand>
        <name>Ca(2+)</name>
        <dbReference type="ChEBI" id="CHEBI:29108"/>
        <label>2</label>
    </ligand>
</feature>
<feature type="binding site" evidence="2">
    <location>
        <position position="63"/>
    </location>
    <ligand>
        <name>Ca(2+)</name>
        <dbReference type="ChEBI" id="CHEBI:29108"/>
        <label>2</label>
    </ligand>
</feature>
<feature type="binding site" evidence="2">
    <location>
        <position position="68"/>
    </location>
    <ligand>
        <name>Ca(2+)</name>
        <dbReference type="ChEBI" id="CHEBI:29108"/>
        <label>2</label>
    </ligand>
</feature>
<feature type="binding site" evidence="2">
    <location>
        <position position="94"/>
    </location>
    <ligand>
        <name>Ca(2+)</name>
        <dbReference type="ChEBI" id="CHEBI:29108"/>
        <label>3</label>
    </ligand>
</feature>
<feature type="binding site" evidence="2">
    <location>
        <position position="96"/>
    </location>
    <ligand>
        <name>Ca(2+)</name>
        <dbReference type="ChEBI" id="CHEBI:29108"/>
        <label>3</label>
    </ligand>
</feature>
<feature type="binding site" evidence="2">
    <location>
        <position position="98"/>
    </location>
    <ligand>
        <name>Ca(2+)</name>
        <dbReference type="ChEBI" id="CHEBI:29108"/>
        <label>3</label>
    </ligand>
</feature>
<feature type="binding site" evidence="2">
    <location>
        <position position="100"/>
    </location>
    <ligand>
        <name>Ca(2+)</name>
        <dbReference type="ChEBI" id="CHEBI:29108"/>
        <label>3</label>
    </ligand>
</feature>
<feature type="binding site" evidence="2">
    <location>
        <position position="105"/>
    </location>
    <ligand>
        <name>Ca(2+)</name>
        <dbReference type="ChEBI" id="CHEBI:29108"/>
        <label>3</label>
    </ligand>
</feature>
<feature type="binding site" evidence="2">
    <location>
        <position position="130"/>
    </location>
    <ligand>
        <name>Ca(2+)</name>
        <dbReference type="ChEBI" id="CHEBI:29108"/>
        <label>4</label>
    </ligand>
</feature>
<feature type="binding site" evidence="2">
    <location>
        <position position="132"/>
    </location>
    <ligand>
        <name>Ca(2+)</name>
        <dbReference type="ChEBI" id="CHEBI:29108"/>
        <label>4</label>
    </ligand>
</feature>
<feature type="binding site" evidence="2">
    <location>
        <position position="134"/>
    </location>
    <ligand>
        <name>Ca(2+)</name>
        <dbReference type="ChEBI" id="CHEBI:29108"/>
        <label>4</label>
    </ligand>
</feature>
<feature type="binding site" evidence="2">
    <location>
        <position position="136"/>
    </location>
    <ligand>
        <name>Ca(2+)</name>
        <dbReference type="ChEBI" id="CHEBI:29108"/>
        <label>4</label>
    </ligand>
</feature>
<feature type="binding site" evidence="2">
    <location>
        <position position="141"/>
    </location>
    <ligand>
        <name>Ca(2+)</name>
        <dbReference type="ChEBI" id="CHEBI:29108"/>
        <label>4</label>
    </ligand>
</feature>
<feature type="modified residue" description="N-acetylalanine" evidence="1">
    <location>
        <position position="2"/>
    </location>
</feature>
<feature type="modified residue" description="N6,N6,N6-trimethyllysine" evidence="1">
    <location>
        <position position="116"/>
    </location>
</feature>
<proteinExistence type="evidence at protein level"/>